<feature type="chain" id="PRO_0000104434" description="Large ribosomal subunit protein uL11">
    <location>
        <begin position="1"/>
        <end position="161"/>
    </location>
</feature>
<comment type="function">
    <text evidence="1">Forms part of the ribosomal stalk which helps the ribosome interact with GTP-bound translation factors.</text>
</comment>
<comment type="subunit">
    <text evidence="1">Part of the ribosomal stalk of the 50S ribosomal subunit. Interacts with L10 and the large rRNA to form the base of the stalk. L10 forms an elongated spine to which L12 dimers bind in a sequential fashion forming a multimeric L10(L12)X complex.</text>
</comment>
<comment type="similarity">
    <text evidence="1">Belongs to the universal ribosomal protein uL11 family.</text>
</comment>
<evidence type="ECO:0000255" key="1">
    <source>
        <dbReference type="HAMAP-Rule" id="MF_00736"/>
    </source>
</evidence>
<evidence type="ECO:0000305" key="2"/>
<keyword id="KW-1185">Reference proteome</keyword>
<keyword id="KW-0687">Ribonucleoprotein</keyword>
<keyword id="KW-0689">Ribosomal protein</keyword>
<keyword id="KW-0694">RNA-binding</keyword>
<keyword id="KW-0699">rRNA-binding</keyword>
<sequence>MTSIVEALVPGGKANPGPPLGPALGPLGVNIKEVVEKINEKTRDYNGMQVPVKVIVDDKKNVEIEVGTPPTASLVMKELGIQKGSGNAGSEVVGNLTISQVAKVARMKKEDVLSYDLKAAMKEVMGSCVPMGVNVEGMKAKDCQKALDEGKFDDLLAGEAW</sequence>
<reference key="1">
    <citation type="journal article" date="2002" name="Genome Res.">
        <title>The genome of Methanosarcina acetivorans reveals extensive metabolic and physiological diversity.</title>
        <authorList>
            <person name="Galagan J.E."/>
            <person name="Nusbaum C."/>
            <person name="Roy A."/>
            <person name="Endrizzi M.G."/>
            <person name="Macdonald P."/>
            <person name="FitzHugh W."/>
            <person name="Calvo S."/>
            <person name="Engels R."/>
            <person name="Smirnov S."/>
            <person name="Atnoor D."/>
            <person name="Brown A."/>
            <person name="Allen N."/>
            <person name="Naylor J."/>
            <person name="Stange-Thomann N."/>
            <person name="DeArellano K."/>
            <person name="Johnson R."/>
            <person name="Linton L."/>
            <person name="McEwan P."/>
            <person name="McKernan K."/>
            <person name="Talamas J."/>
            <person name="Tirrell A."/>
            <person name="Ye W."/>
            <person name="Zimmer A."/>
            <person name="Barber R.D."/>
            <person name="Cann I."/>
            <person name="Graham D.E."/>
            <person name="Grahame D.A."/>
            <person name="Guss A.M."/>
            <person name="Hedderich R."/>
            <person name="Ingram-Smith C."/>
            <person name="Kuettner H.C."/>
            <person name="Krzycki J.A."/>
            <person name="Leigh J.A."/>
            <person name="Li W."/>
            <person name="Liu J."/>
            <person name="Mukhopadhyay B."/>
            <person name="Reeve J.N."/>
            <person name="Smith K."/>
            <person name="Springer T.A."/>
            <person name="Umayam L.A."/>
            <person name="White O."/>
            <person name="White R.H."/>
            <person name="de Macario E.C."/>
            <person name="Ferry J.G."/>
            <person name="Jarrell K.F."/>
            <person name="Jing H."/>
            <person name="Macario A.J.L."/>
            <person name="Paulsen I.T."/>
            <person name="Pritchett M."/>
            <person name="Sowers K.R."/>
            <person name="Swanson R.V."/>
            <person name="Zinder S.H."/>
            <person name="Lander E."/>
            <person name="Metcalf W.W."/>
            <person name="Birren B."/>
        </authorList>
    </citation>
    <scope>NUCLEOTIDE SEQUENCE [LARGE SCALE GENOMIC DNA]</scope>
    <source>
        <strain>ATCC 35395 / DSM 2834 / JCM 12185 / C2A</strain>
    </source>
</reference>
<gene>
    <name evidence="1" type="primary">rpl11</name>
    <name type="ordered locus">MA_4274</name>
</gene>
<dbReference type="EMBL" id="AE010299">
    <property type="protein sequence ID" value="AAM07618.1"/>
    <property type="molecule type" value="Genomic_DNA"/>
</dbReference>
<dbReference type="RefSeq" id="WP_011024155.1">
    <property type="nucleotide sequence ID" value="NC_003552.1"/>
</dbReference>
<dbReference type="SMR" id="Q8TI82"/>
<dbReference type="FunCoup" id="Q8TI82">
    <property type="interactions" value="161"/>
</dbReference>
<dbReference type="STRING" id="188937.MA_4274"/>
<dbReference type="EnsemblBacteria" id="AAM07618">
    <property type="protein sequence ID" value="AAM07618"/>
    <property type="gene ID" value="MA_4274"/>
</dbReference>
<dbReference type="GeneID" id="1476168"/>
<dbReference type="KEGG" id="mac:MA_4274"/>
<dbReference type="HOGENOM" id="CLU_074237_4_0_2"/>
<dbReference type="InParanoid" id="Q8TI82"/>
<dbReference type="OrthoDB" id="8842at2157"/>
<dbReference type="PhylomeDB" id="Q8TI82"/>
<dbReference type="Proteomes" id="UP000002487">
    <property type="component" value="Chromosome"/>
</dbReference>
<dbReference type="GO" id="GO:0015934">
    <property type="term" value="C:large ribosomal subunit"/>
    <property type="evidence" value="ECO:0000318"/>
    <property type="project" value="GO_Central"/>
</dbReference>
<dbReference type="GO" id="GO:0070180">
    <property type="term" value="F:large ribosomal subunit rRNA binding"/>
    <property type="evidence" value="ECO:0000318"/>
    <property type="project" value="GO_Central"/>
</dbReference>
<dbReference type="GO" id="GO:0003735">
    <property type="term" value="F:structural constituent of ribosome"/>
    <property type="evidence" value="ECO:0000318"/>
    <property type="project" value="GO_Central"/>
</dbReference>
<dbReference type="GO" id="GO:0006412">
    <property type="term" value="P:translation"/>
    <property type="evidence" value="ECO:0000318"/>
    <property type="project" value="GO_Central"/>
</dbReference>
<dbReference type="CDD" id="cd00349">
    <property type="entry name" value="Ribosomal_L11"/>
    <property type="match status" value="1"/>
</dbReference>
<dbReference type="FunFam" id="1.10.10.250:FF:000006">
    <property type="entry name" value="50S ribosomal protein L11"/>
    <property type="match status" value="1"/>
</dbReference>
<dbReference type="FunFam" id="3.30.1550.10:FF:000007">
    <property type="entry name" value="50S ribosomal protein L11"/>
    <property type="match status" value="1"/>
</dbReference>
<dbReference type="Gene3D" id="1.10.10.250">
    <property type="entry name" value="Ribosomal protein L11, C-terminal domain"/>
    <property type="match status" value="1"/>
</dbReference>
<dbReference type="Gene3D" id="3.30.1550.10">
    <property type="entry name" value="Ribosomal protein L11/L12, N-terminal domain"/>
    <property type="match status" value="1"/>
</dbReference>
<dbReference type="HAMAP" id="MF_00736">
    <property type="entry name" value="Ribosomal_uL11"/>
    <property type="match status" value="1"/>
</dbReference>
<dbReference type="InterPro" id="IPR000911">
    <property type="entry name" value="Ribosomal_uL11"/>
</dbReference>
<dbReference type="InterPro" id="IPR020783">
    <property type="entry name" value="Ribosomal_uL11_C"/>
</dbReference>
<dbReference type="InterPro" id="IPR036769">
    <property type="entry name" value="Ribosomal_uL11_C_sf"/>
</dbReference>
<dbReference type="InterPro" id="IPR020784">
    <property type="entry name" value="Ribosomal_uL11_N"/>
</dbReference>
<dbReference type="InterPro" id="IPR036796">
    <property type="entry name" value="Ribosomal_uL11_N_sf"/>
</dbReference>
<dbReference type="NCBIfam" id="NF002232">
    <property type="entry name" value="PRK01143.1"/>
    <property type="match status" value="1"/>
</dbReference>
<dbReference type="PANTHER" id="PTHR11661">
    <property type="entry name" value="60S RIBOSOMAL PROTEIN L12"/>
    <property type="match status" value="1"/>
</dbReference>
<dbReference type="PANTHER" id="PTHR11661:SF1">
    <property type="entry name" value="LARGE RIBOSOMAL SUBUNIT PROTEIN UL11M"/>
    <property type="match status" value="1"/>
</dbReference>
<dbReference type="Pfam" id="PF00298">
    <property type="entry name" value="Ribosomal_L11"/>
    <property type="match status" value="1"/>
</dbReference>
<dbReference type="Pfam" id="PF03946">
    <property type="entry name" value="Ribosomal_L11_N"/>
    <property type="match status" value="1"/>
</dbReference>
<dbReference type="SMART" id="SM00649">
    <property type="entry name" value="RL11"/>
    <property type="match status" value="1"/>
</dbReference>
<dbReference type="SUPFAM" id="SSF54747">
    <property type="entry name" value="Ribosomal L11/L12e N-terminal domain"/>
    <property type="match status" value="1"/>
</dbReference>
<dbReference type="SUPFAM" id="SSF46906">
    <property type="entry name" value="Ribosomal protein L11, C-terminal domain"/>
    <property type="match status" value="1"/>
</dbReference>
<name>RL11_METAC</name>
<accession>Q8TI82</accession>
<protein>
    <recommendedName>
        <fullName evidence="1">Large ribosomal subunit protein uL11</fullName>
    </recommendedName>
    <alternativeName>
        <fullName evidence="2">50S ribosomal protein L11</fullName>
    </alternativeName>
</protein>
<proteinExistence type="inferred from homology"/>
<organism>
    <name type="scientific">Methanosarcina acetivorans (strain ATCC 35395 / DSM 2834 / JCM 12185 / C2A)</name>
    <dbReference type="NCBI Taxonomy" id="188937"/>
    <lineage>
        <taxon>Archaea</taxon>
        <taxon>Methanobacteriati</taxon>
        <taxon>Methanobacteriota</taxon>
        <taxon>Stenosarchaea group</taxon>
        <taxon>Methanomicrobia</taxon>
        <taxon>Methanosarcinales</taxon>
        <taxon>Methanosarcinaceae</taxon>
        <taxon>Methanosarcina</taxon>
    </lineage>
</organism>